<keyword id="KW-0067">ATP-binding</keyword>
<keyword id="KW-0997">Cell inner membrane</keyword>
<keyword id="KW-1003">Cell membrane</keyword>
<keyword id="KW-0201">Cytochrome c-type biogenesis</keyword>
<keyword id="KW-0472">Membrane</keyword>
<keyword id="KW-0547">Nucleotide-binding</keyword>
<keyword id="KW-1185">Reference proteome</keyword>
<keyword id="KW-1278">Translocase</keyword>
<keyword id="KW-0813">Transport</keyword>
<gene>
    <name evidence="1" type="primary">ccmA</name>
    <name type="ordered locus">XCC2219</name>
</gene>
<proteinExistence type="inferred from homology"/>
<protein>
    <recommendedName>
        <fullName evidence="1">Cytochrome c biogenesis ATP-binding export protein CcmA</fullName>
        <ecNumber evidence="1">7.6.2.5</ecNumber>
    </recommendedName>
    <alternativeName>
        <fullName evidence="1">Heme exporter protein A</fullName>
    </alternativeName>
</protein>
<reference key="1">
    <citation type="journal article" date="2002" name="Nature">
        <title>Comparison of the genomes of two Xanthomonas pathogens with differing host specificities.</title>
        <authorList>
            <person name="da Silva A.C.R."/>
            <person name="Ferro J.A."/>
            <person name="Reinach F.C."/>
            <person name="Farah C.S."/>
            <person name="Furlan L.R."/>
            <person name="Quaggio R.B."/>
            <person name="Monteiro-Vitorello C.B."/>
            <person name="Van Sluys M.A."/>
            <person name="Almeida N.F. Jr."/>
            <person name="Alves L.M.C."/>
            <person name="do Amaral A.M."/>
            <person name="Bertolini M.C."/>
            <person name="Camargo L.E.A."/>
            <person name="Camarotte G."/>
            <person name="Cannavan F."/>
            <person name="Cardozo J."/>
            <person name="Chambergo F."/>
            <person name="Ciapina L.P."/>
            <person name="Cicarelli R.M.B."/>
            <person name="Coutinho L.L."/>
            <person name="Cursino-Santos J.R."/>
            <person name="El-Dorry H."/>
            <person name="Faria J.B."/>
            <person name="Ferreira A.J.S."/>
            <person name="Ferreira R.C.C."/>
            <person name="Ferro M.I.T."/>
            <person name="Formighieri E.F."/>
            <person name="Franco M.C."/>
            <person name="Greggio C.C."/>
            <person name="Gruber A."/>
            <person name="Katsuyama A.M."/>
            <person name="Kishi L.T."/>
            <person name="Leite R.P."/>
            <person name="Lemos E.G.M."/>
            <person name="Lemos M.V.F."/>
            <person name="Locali E.C."/>
            <person name="Machado M.A."/>
            <person name="Madeira A.M.B.N."/>
            <person name="Martinez-Rossi N.M."/>
            <person name="Martins E.C."/>
            <person name="Meidanis J."/>
            <person name="Menck C.F.M."/>
            <person name="Miyaki C.Y."/>
            <person name="Moon D.H."/>
            <person name="Moreira L.M."/>
            <person name="Novo M.T.M."/>
            <person name="Okura V.K."/>
            <person name="Oliveira M.C."/>
            <person name="Oliveira V.R."/>
            <person name="Pereira H.A."/>
            <person name="Rossi A."/>
            <person name="Sena J.A.D."/>
            <person name="Silva C."/>
            <person name="de Souza R.F."/>
            <person name="Spinola L.A.F."/>
            <person name="Takita M.A."/>
            <person name="Tamura R.E."/>
            <person name="Teixeira E.C."/>
            <person name="Tezza R.I.D."/>
            <person name="Trindade dos Santos M."/>
            <person name="Truffi D."/>
            <person name="Tsai S.M."/>
            <person name="White F.F."/>
            <person name="Setubal J.C."/>
            <person name="Kitajima J.P."/>
        </authorList>
    </citation>
    <scope>NUCLEOTIDE SEQUENCE [LARGE SCALE GENOMIC DNA]</scope>
    <source>
        <strain>ATCC 33913 / DSM 3586 / NCPPB 528 / LMG 568 / P 25</strain>
    </source>
</reference>
<organism>
    <name type="scientific">Xanthomonas campestris pv. campestris (strain ATCC 33913 / DSM 3586 / NCPPB 528 / LMG 568 / P 25)</name>
    <dbReference type="NCBI Taxonomy" id="190485"/>
    <lineage>
        <taxon>Bacteria</taxon>
        <taxon>Pseudomonadati</taxon>
        <taxon>Pseudomonadota</taxon>
        <taxon>Gammaproteobacteria</taxon>
        <taxon>Lysobacterales</taxon>
        <taxon>Lysobacteraceae</taxon>
        <taxon>Xanthomonas</taxon>
    </lineage>
</organism>
<evidence type="ECO:0000255" key="1">
    <source>
        <dbReference type="HAMAP-Rule" id="MF_01707"/>
    </source>
</evidence>
<name>CCMA_XANCP</name>
<dbReference type="EC" id="7.6.2.5" evidence="1"/>
<dbReference type="EMBL" id="AE008922">
    <property type="protein sequence ID" value="AAM41499.1"/>
    <property type="molecule type" value="Genomic_DNA"/>
</dbReference>
<dbReference type="RefSeq" id="NP_637575.1">
    <property type="nucleotide sequence ID" value="NC_003902.1"/>
</dbReference>
<dbReference type="RefSeq" id="WP_011037364.1">
    <property type="nucleotide sequence ID" value="NC_003902.1"/>
</dbReference>
<dbReference type="SMR" id="Q8P8M1"/>
<dbReference type="STRING" id="190485.XCC2219"/>
<dbReference type="EnsemblBacteria" id="AAM41499">
    <property type="protein sequence ID" value="AAM41499"/>
    <property type="gene ID" value="XCC2219"/>
</dbReference>
<dbReference type="GeneID" id="58013208"/>
<dbReference type="KEGG" id="xcc:XCC2219"/>
<dbReference type="PATRIC" id="fig|190485.4.peg.2370"/>
<dbReference type="eggNOG" id="COG4133">
    <property type="taxonomic scope" value="Bacteria"/>
</dbReference>
<dbReference type="HOGENOM" id="CLU_000604_1_2_6"/>
<dbReference type="OrthoDB" id="9800654at2"/>
<dbReference type="Proteomes" id="UP000001010">
    <property type="component" value="Chromosome"/>
</dbReference>
<dbReference type="GO" id="GO:0005886">
    <property type="term" value="C:plasma membrane"/>
    <property type="evidence" value="ECO:0007669"/>
    <property type="project" value="UniProtKB-SubCell"/>
</dbReference>
<dbReference type="GO" id="GO:0015439">
    <property type="term" value="F:ABC-type heme transporter activity"/>
    <property type="evidence" value="ECO:0007669"/>
    <property type="project" value="UniProtKB-EC"/>
</dbReference>
<dbReference type="GO" id="GO:0005524">
    <property type="term" value="F:ATP binding"/>
    <property type="evidence" value="ECO:0007669"/>
    <property type="project" value="UniProtKB-KW"/>
</dbReference>
<dbReference type="GO" id="GO:0016887">
    <property type="term" value="F:ATP hydrolysis activity"/>
    <property type="evidence" value="ECO:0007669"/>
    <property type="project" value="InterPro"/>
</dbReference>
<dbReference type="GO" id="GO:0017004">
    <property type="term" value="P:cytochrome complex assembly"/>
    <property type="evidence" value="ECO:0007669"/>
    <property type="project" value="UniProtKB-KW"/>
</dbReference>
<dbReference type="Gene3D" id="3.40.50.300">
    <property type="entry name" value="P-loop containing nucleotide triphosphate hydrolases"/>
    <property type="match status" value="1"/>
</dbReference>
<dbReference type="InterPro" id="IPR003593">
    <property type="entry name" value="AAA+_ATPase"/>
</dbReference>
<dbReference type="InterPro" id="IPR003439">
    <property type="entry name" value="ABC_transporter-like_ATP-bd"/>
</dbReference>
<dbReference type="InterPro" id="IPR017871">
    <property type="entry name" value="ABC_transporter-like_CS"/>
</dbReference>
<dbReference type="InterPro" id="IPR005895">
    <property type="entry name" value="ABC_transptr_haem_export_CcmA"/>
</dbReference>
<dbReference type="InterPro" id="IPR027417">
    <property type="entry name" value="P-loop_NTPase"/>
</dbReference>
<dbReference type="NCBIfam" id="TIGR01189">
    <property type="entry name" value="ccmA"/>
    <property type="match status" value="1"/>
</dbReference>
<dbReference type="NCBIfam" id="NF010061">
    <property type="entry name" value="PRK13538.1"/>
    <property type="match status" value="1"/>
</dbReference>
<dbReference type="PANTHER" id="PTHR43499">
    <property type="entry name" value="ABC TRANSPORTER I FAMILY MEMBER 1"/>
    <property type="match status" value="1"/>
</dbReference>
<dbReference type="PANTHER" id="PTHR43499:SF1">
    <property type="entry name" value="ABC TRANSPORTER I FAMILY MEMBER 1"/>
    <property type="match status" value="1"/>
</dbReference>
<dbReference type="Pfam" id="PF00005">
    <property type="entry name" value="ABC_tran"/>
    <property type="match status" value="1"/>
</dbReference>
<dbReference type="SMART" id="SM00382">
    <property type="entry name" value="AAA"/>
    <property type="match status" value="1"/>
</dbReference>
<dbReference type="SUPFAM" id="SSF52540">
    <property type="entry name" value="P-loop containing nucleoside triphosphate hydrolases"/>
    <property type="match status" value="1"/>
</dbReference>
<dbReference type="PROSITE" id="PS00211">
    <property type="entry name" value="ABC_TRANSPORTER_1"/>
    <property type="match status" value="1"/>
</dbReference>
<dbReference type="PROSITE" id="PS50893">
    <property type="entry name" value="ABC_TRANSPORTER_2"/>
    <property type="match status" value="1"/>
</dbReference>
<dbReference type="PROSITE" id="PS51243">
    <property type="entry name" value="CCMA"/>
    <property type="match status" value="1"/>
</dbReference>
<sequence length="214" mass="22941">MIDPLHTAPPLLAARALAFSRNEEPVFGPLDFHVDAGEALLVQGDNGAGKTTLLRVLAGLLHVERGEILIDGKTARRGDRSRFMAYLGHLPGLKADLSTLENLHFLCGLHGRRAKQMPGSALAIVGLAGYEDALVRQLSAGQRKRLALARLWLSPAPLWLLDEPYANLDLEGITLVNRMISAHLRGGGAALVTTHGAYAAPPVRTRMLTLEAAA</sequence>
<feature type="chain" id="PRO_0000092223" description="Cytochrome c biogenesis ATP-binding export protein CcmA">
    <location>
        <begin position="1"/>
        <end position="214"/>
    </location>
</feature>
<feature type="domain" description="ABC transporter" evidence="1">
    <location>
        <begin position="12"/>
        <end position="214"/>
    </location>
</feature>
<feature type="binding site" evidence="1">
    <location>
        <begin position="44"/>
        <end position="51"/>
    </location>
    <ligand>
        <name>ATP</name>
        <dbReference type="ChEBI" id="CHEBI:30616"/>
    </ligand>
</feature>
<accession>Q8P8M1</accession>
<comment type="function">
    <text evidence="1">Part of the ABC transporter complex CcmAB involved in the biogenesis of c-type cytochromes; once thought to export heme, this seems not to be the case, but its exact role is uncertain. Responsible for energy coupling to the transport system.</text>
</comment>
<comment type="catalytic activity">
    <reaction evidence="1">
        <text>heme b(in) + ATP + H2O = heme b(out) + ADP + phosphate + H(+)</text>
        <dbReference type="Rhea" id="RHEA:19261"/>
        <dbReference type="ChEBI" id="CHEBI:15377"/>
        <dbReference type="ChEBI" id="CHEBI:15378"/>
        <dbReference type="ChEBI" id="CHEBI:30616"/>
        <dbReference type="ChEBI" id="CHEBI:43474"/>
        <dbReference type="ChEBI" id="CHEBI:60344"/>
        <dbReference type="ChEBI" id="CHEBI:456216"/>
        <dbReference type="EC" id="7.6.2.5"/>
    </reaction>
</comment>
<comment type="subunit">
    <text evidence="1">The complex is composed of two ATP-binding proteins (CcmA) and two transmembrane proteins (CcmB).</text>
</comment>
<comment type="subcellular location">
    <subcellularLocation>
        <location evidence="1">Cell inner membrane</location>
        <topology evidence="1">Peripheral membrane protein</topology>
    </subcellularLocation>
</comment>
<comment type="similarity">
    <text evidence="1">Belongs to the ABC transporter superfamily. CcmA exporter (TC 3.A.1.107) family.</text>
</comment>